<evidence type="ECO:0000255" key="1"/>
<evidence type="ECO:0000256" key="2">
    <source>
        <dbReference type="SAM" id="MobiDB-lite"/>
    </source>
</evidence>
<evidence type="ECO:0000269" key="3">
    <source>
    </source>
</evidence>
<evidence type="ECO:0000269" key="4">
    <source>
    </source>
</evidence>
<evidence type="ECO:0000269" key="5">
    <source>
    </source>
</evidence>
<evidence type="ECO:0000269" key="6">
    <source>
    </source>
</evidence>
<evidence type="ECO:0000269" key="7">
    <source>
    </source>
</evidence>
<evidence type="ECO:0000305" key="8"/>
<proteinExistence type="evidence at protein level"/>
<organism>
    <name type="scientific">Candida albicans (strain SC5314 / ATCC MYA-2876)</name>
    <name type="common">Yeast</name>
    <dbReference type="NCBI Taxonomy" id="237561"/>
    <lineage>
        <taxon>Eukaryota</taxon>
        <taxon>Fungi</taxon>
        <taxon>Dikarya</taxon>
        <taxon>Ascomycota</taxon>
        <taxon>Saccharomycotina</taxon>
        <taxon>Pichiomycetes</taxon>
        <taxon>Debaryomycetaceae</taxon>
        <taxon>Candida/Lodderomyces clade</taxon>
        <taxon>Candida</taxon>
    </lineage>
</organism>
<gene>
    <name type="primary">PGA23</name>
    <name type="synonym">PGR23</name>
    <name type="synonym">SLP99</name>
    <name type="ordered locus">CAALFM_CR02280WA</name>
    <name type="ORF">CaO19.11225</name>
    <name type="ORF">CaO19.3740</name>
</gene>
<reference key="1">
    <citation type="journal article" date="2004" name="Proc. Natl. Acad. Sci. U.S.A.">
        <title>The diploid genome sequence of Candida albicans.</title>
        <authorList>
            <person name="Jones T."/>
            <person name="Federspiel N.A."/>
            <person name="Chibana H."/>
            <person name="Dungan J."/>
            <person name="Kalman S."/>
            <person name="Magee B.B."/>
            <person name="Newport G."/>
            <person name="Thorstenson Y.R."/>
            <person name="Agabian N."/>
            <person name="Magee P.T."/>
            <person name="Davis R.W."/>
            <person name="Scherer S."/>
        </authorList>
    </citation>
    <scope>NUCLEOTIDE SEQUENCE [LARGE SCALE GENOMIC DNA]</scope>
    <source>
        <strain>SC5314 / ATCC MYA-2876</strain>
    </source>
</reference>
<reference key="2">
    <citation type="journal article" date="2007" name="Genome Biol.">
        <title>Assembly of the Candida albicans genome into sixteen supercontigs aligned on the eight chromosomes.</title>
        <authorList>
            <person name="van het Hoog M."/>
            <person name="Rast T.J."/>
            <person name="Martchenko M."/>
            <person name="Grindle S."/>
            <person name="Dignard D."/>
            <person name="Hogues H."/>
            <person name="Cuomo C."/>
            <person name="Berriman M."/>
            <person name="Scherer S."/>
            <person name="Magee B.B."/>
            <person name="Whiteway M."/>
            <person name="Chibana H."/>
            <person name="Nantel A."/>
            <person name="Magee P.T."/>
        </authorList>
    </citation>
    <scope>GENOME REANNOTATION</scope>
    <source>
        <strain>SC5314 / ATCC MYA-2876</strain>
    </source>
</reference>
<reference key="3">
    <citation type="journal article" date="2013" name="Genome Biol.">
        <title>Assembly of a phased diploid Candida albicans genome facilitates allele-specific measurements and provides a simple model for repeat and indel structure.</title>
        <authorList>
            <person name="Muzzey D."/>
            <person name="Schwartz K."/>
            <person name="Weissman J.S."/>
            <person name="Sherlock G."/>
        </authorList>
    </citation>
    <scope>NUCLEOTIDE SEQUENCE [LARGE SCALE GENOMIC DNA]</scope>
    <scope>GENOME REANNOTATION</scope>
    <source>
        <strain>SC5314 / ATCC MYA-2876</strain>
    </source>
</reference>
<reference key="4">
    <citation type="journal article" date="2003" name="Eukaryot. Cell">
        <title>Diverged binding specificity of Rim101p, the Candida albicans ortholog of PacC.</title>
        <authorList>
            <person name="Ramon A.M."/>
            <person name="Fonzi W.A."/>
        </authorList>
    </citation>
    <scope>INDUCTION</scope>
</reference>
<reference key="5">
    <citation type="journal article" date="2003" name="Yeast">
        <title>Genome-wide identification of fungal GPI proteins.</title>
        <authorList>
            <person name="De Groot P.W."/>
            <person name="Hellingwerf K.J."/>
            <person name="Klis F.M."/>
        </authorList>
    </citation>
    <scope>PREDICTION OF GPI-ANCHOR</scope>
</reference>
<reference key="6">
    <citation type="journal article" date="2004" name="Mol. Biol. Cell">
        <title>Transcription profiling of cyclic AMP signaling in Candida albicans.</title>
        <authorList>
            <person name="Harcus D."/>
            <person name="Nantel A."/>
            <person name="Marcil A."/>
            <person name="Rigby T."/>
            <person name="Whiteway M."/>
        </authorList>
    </citation>
    <scope>INDUCTION</scope>
</reference>
<reference key="7">
    <citation type="journal article" date="2005" name="Mol. Biol. Cell">
        <title>Global roles of Ssn6 in Tup1- and Nrg1-dependent gene regulation in the fungal pathogen, Candida albicans.</title>
        <authorList>
            <person name="Garcia-Sanchez S."/>
            <person name="Mavor A.L."/>
            <person name="Russell C.L."/>
            <person name="Argimon S."/>
            <person name="Dennison P."/>
            <person name="Enjalbert B."/>
            <person name="Brown A.J."/>
        </authorList>
    </citation>
    <scope>INDUCTION</scope>
</reference>
<reference key="8">
    <citation type="journal article" date="2006" name="FEMS Yeast Res.">
        <title>An in vitro assay to study the transcriptional response during adherence of Candida albicans to different human epithelia.</title>
        <authorList>
            <person name="Sohn K."/>
            <person name="Senyurek I."/>
            <person name="Fertey J."/>
            <person name="Konigsdorfer A."/>
            <person name="Joffroy C."/>
            <person name="Hauser N."/>
            <person name="Zelt G."/>
            <person name="Brunner H."/>
            <person name="Rupp S."/>
        </authorList>
    </citation>
    <scope>INDUCTION</scope>
    <scope>FUNCTION</scope>
</reference>
<reference key="9">
    <citation type="journal article" date="2013" name="Antimicrob. Agents Chemother.">
        <title>Milbemycins: more than efflux inhibitors for fungal pathogens.</title>
        <authorList>
            <person name="Silva L.V."/>
            <person name="Sanguinetti M."/>
            <person name="Vandeputte P."/>
            <person name="Torelli R."/>
            <person name="Rochat B."/>
            <person name="Sanglard D."/>
        </authorList>
    </citation>
    <scope>INDUCTION</scope>
</reference>
<sequence length="282" mass="24390">MRVSTLVLSTSIIPIATALNISPFHNIEKKDILADAASAAGGAAAAVTSGAVGAANTVASGAAGAADTATSGAAGIANTVASGAAGAADTATSGAAGAAKTATSGAAGAADTATSGAVGAAKTATSGAAGAAKTATSGAAGAASGAETAAGAAASGAETAAAGQETSGAGSLVGGSGSSNSTSPSGGSGSSNGTSSGSGSGSGAGVGSGSGSGSGSRGSITGNSVATGASSGPAGLGISSSISQSTTRQLQTSGSSNSSSSAGMGNVVVGMNAVALAALVLI</sequence>
<comment type="function">
    <text evidence="6">Probable cell surface protein involved in the process of adhesion and early events of invasion.</text>
</comment>
<comment type="subcellular location">
    <subcellularLocation>
        <location evidence="8">Cell membrane</location>
        <topology evidence="8">Lipid-anchor</topology>
        <topology evidence="8">GPI-anchor</topology>
    </subcellularLocation>
</comment>
<comment type="induction">
    <text evidence="3 4 5 6 7">Up-regulated when cells are growing in an adherent manner and upon milbemycins A3 oxim derivative (A3Ox) treatment. Expression is also regulated by CYR1, RIM101 and SSN6.</text>
</comment>
<feature type="signal peptide" evidence="1">
    <location>
        <begin position="1"/>
        <end position="18"/>
    </location>
</feature>
<feature type="chain" id="PRO_0000424927" description="Predicted GPI-anchored protein 23">
    <location>
        <begin position="19"/>
        <end position="259"/>
    </location>
</feature>
<feature type="propeptide" id="PRO_0000424928" description="Removed in mature form" evidence="1">
    <location>
        <begin position="260"/>
        <end position="282"/>
    </location>
</feature>
<feature type="region of interest" description="Disordered" evidence="2">
    <location>
        <begin position="163"/>
        <end position="264"/>
    </location>
</feature>
<feature type="compositionally biased region" description="Gly residues" evidence="2">
    <location>
        <begin position="186"/>
        <end position="216"/>
    </location>
</feature>
<feature type="compositionally biased region" description="Low complexity" evidence="2">
    <location>
        <begin position="236"/>
        <end position="264"/>
    </location>
</feature>
<feature type="lipid moiety-binding region" description="GPI-anchor amidated serine" evidence="1">
    <location>
        <position position="259"/>
    </location>
</feature>
<feature type="glycosylation site" description="N-linked (GlcNAc...) asparagine" evidence="1">
    <location>
        <position position="180"/>
    </location>
</feature>
<feature type="glycosylation site" description="N-linked (GlcNAc...) asparagine" evidence="1">
    <location>
        <position position="192"/>
    </location>
</feature>
<feature type="glycosylation site" description="N-linked (GlcNAc...) asparagine" evidence="1">
    <location>
        <position position="257"/>
    </location>
</feature>
<name>PGA23_CANAL</name>
<keyword id="KW-0130">Cell adhesion</keyword>
<keyword id="KW-1003">Cell membrane</keyword>
<keyword id="KW-0325">Glycoprotein</keyword>
<keyword id="KW-0336">GPI-anchor</keyword>
<keyword id="KW-0449">Lipoprotein</keyword>
<keyword id="KW-0472">Membrane</keyword>
<keyword id="KW-1185">Reference proteome</keyword>
<keyword id="KW-0732">Signal</keyword>
<keyword id="KW-0843">Virulence</keyword>
<protein>
    <recommendedName>
        <fullName>Predicted GPI-anchored protein 23</fullName>
    </recommendedName>
</protein>
<accession>Q59V01</accession>
<accession>A0A1D8PS63</accession>
<accession>Q59V37</accession>
<dbReference type="EMBL" id="CP017630">
    <property type="protein sequence ID" value="AOW30977.1"/>
    <property type="molecule type" value="Genomic_DNA"/>
</dbReference>
<dbReference type="RefSeq" id="XP_713428.1">
    <property type="nucleotide sequence ID" value="XM_708335.2"/>
</dbReference>
<dbReference type="STRING" id="237561.Q59V01"/>
<dbReference type="GlyCosmos" id="Q59V01">
    <property type="glycosylation" value="3 sites, No reported glycans"/>
</dbReference>
<dbReference type="EnsemblFungi" id="CR_02280W_A-T">
    <property type="protein sequence ID" value="CR_02280W_A-T-p1"/>
    <property type="gene ID" value="CR_02280W_A"/>
</dbReference>
<dbReference type="GeneID" id="3644941"/>
<dbReference type="KEGG" id="cal:CAALFM_CR02280WA"/>
<dbReference type="CGD" id="CAL0000196898">
    <property type="gene designation" value="PGA23"/>
</dbReference>
<dbReference type="VEuPathDB" id="FungiDB:CR_02280W_A"/>
<dbReference type="HOGENOM" id="CLU_1042056_0_0_1"/>
<dbReference type="InParanoid" id="Q59V01"/>
<dbReference type="OMA" id="PMGPRGC"/>
<dbReference type="OrthoDB" id="10670740at2759"/>
<dbReference type="PRO" id="PR:Q59V01"/>
<dbReference type="Proteomes" id="UP000000559">
    <property type="component" value="Chromosome R"/>
</dbReference>
<dbReference type="GO" id="GO:0005886">
    <property type="term" value="C:plasma membrane"/>
    <property type="evidence" value="ECO:0007669"/>
    <property type="project" value="UniProtKB-SubCell"/>
</dbReference>
<dbReference type="GO" id="GO:0098552">
    <property type="term" value="C:side of membrane"/>
    <property type="evidence" value="ECO:0007669"/>
    <property type="project" value="UniProtKB-KW"/>
</dbReference>
<dbReference type="GO" id="GO:0007155">
    <property type="term" value="P:cell adhesion"/>
    <property type="evidence" value="ECO:0007669"/>
    <property type="project" value="UniProtKB-KW"/>
</dbReference>